<gene>
    <name type="primary">pe</name>
    <name type="ORF">CGSHi3655_04936</name>
</gene>
<name>HPE_HAEI3</name>
<accession>A4NBN9</accession>
<feature type="signal peptide" evidence="1">
    <location>
        <begin position="1"/>
        <end position="15"/>
    </location>
</feature>
<feature type="chain" id="PRO_0000424421" description="Surface-adhesin protein E">
    <location>
        <begin position="16"/>
        <end position="160"/>
    </location>
</feature>
<feature type="region of interest" description="Interaction with laminin and plasminogen">
    <location>
        <begin position="41"/>
        <end position="68"/>
    </location>
</feature>
<feature type="region of interest" description="Interaction with vitronectin and epithelial cells">
    <location>
        <begin position="84"/>
        <end position="108"/>
    </location>
</feature>
<feature type="lipid moiety-binding region" description="N-palmitoyl cysteine" evidence="1">
    <location>
        <position position="16"/>
    </location>
</feature>
<feature type="lipid moiety-binding region" description="S-diacylglycerol cysteine" evidence="1">
    <location>
        <position position="16"/>
    </location>
</feature>
<feature type="mutagenesis site" description="50% reduction in binding to vitronectin. Does not bind vitronectin; when associated with D-86." evidence="5">
    <original>K</original>
    <variation>E</variation>
    <location>
        <position position="85"/>
    </location>
</feature>
<feature type="mutagenesis site" description="48% reduction in binding to vitronectin. Does not bind vitronectin; when associated with E-85." evidence="5">
    <original>R</original>
    <variation>D</variation>
    <location>
        <position position="86"/>
    </location>
</feature>
<evidence type="ECO:0000255" key="1">
    <source>
        <dbReference type="PROSITE-ProRule" id="PRU00303"/>
    </source>
</evidence>
<evidence type="ECO:0000269" key="2">
    <source>
    </source>
</evidence>
<evidence type="ECO:0000269" key="3">
    <source>
    </source>
</evidence>
<evidence type="ECO:0000269" key="4">
    <source>
    </source>
</evidence>
<evidence type="ECO:0000269" key="5">
    <source>
    </source>
</evidence>
<evidence type="ECO:0000269" key="6">
    <source>
    </source>
</evidence>
<evidence type="ECO:0000269" key="7">
    <source>
    </source>
</evidence>
<evidence type="ECO:0000269" key="8">
    <source>
    </source>
</evidence>
<evidence type="ECO:0000269" key="9">
    <source>
    </source>
</evidence>
<protein>
    <recommendedName>
        <fullName>Surface-adhesin protein E</fullName>
    </recommendedName>
</protein>
<comment type="function">
    <text evidence="2 3 4 5 6 7">Acts as a multifunctional adhesin involved in direct interactions with host epithelial cells and host proteins, including vitronectin, laminin and plasminogen. In addition, interaction with serum vitronectin plays an important role in bacterial serum resistance, and conversion of plasminogen to plasmin at the cell surface aids in immune evasion and contributes to bacterial virulence. Induces a pro-inflammatory epithelial cell response, leading to interleukin-8 (IL-8) secretion and up-regulation of ICAM1.</text>
</comment>
<comment type="subunit">
    <text evidence="4 5 6 7 8 9">Homodimer. Interacts with host vitronectin, laminin and plasminogen. Can interact with both immobilized and soluble vitronectin.</text>
</comment>
<comment type="subcellular location">
    <subcellularLocation>
        <location evidence="2">Cell outer membrane</location>
        <topology evidence="1 2">Lipid-anchor</topology>
    </subcellularLocation>
    <subcellularLocation>
        <location evidence="2">Cell surface</location>
    </subcellularLocation>
</comment>
<comment type="disruption phenotype">
    <text evidence="2 4 6 7">Mutant displays a reduced binding to vitronectin, laminin, plasminogen and epithelial cells, and is more sensitive to killing by human serum compared with the wild type.</text>
</comment>
<sequence length="160" mass="18350">MKKIILTLSLGLLTACSAQIQKAEQNDMKLAPPTDVRSGYIRLVKNVNYYIDSESIWVDNQEPQIVHFDAVVNLDKGLYVYPEPKRYARSVRQYKILNCANYHLTQVRTDFYDEFWGQGLRAAPKKQKKHTLSLTPDTTLYNAAQIICANYGKAFSVDKK</sequence>
<proteinExistence type="evidence at protein level"/>
<keyword id="KW-0002">3D-structure</keyword>
<keyword id="KW-0998">Cell outer membrane</keyword>
<keyword id="KW-0449">Lipoprotein</keyword>
<keyword id="KW-0472">Membrane</keyword>
<keyword id="KW-0564">Palmitate</keyword>
<keyword id="KW-0732">Signal</keyword>
<keyword id="KW-0843">Virulence</keyword>
<organism>
    <name type="scientific">Haemophilus influenzae (strain NTHi 3655)</name>
    <dbReference type="NCBI Taxonomy" id="375177"/>
    <lineage>
        <taxon>Bacteria</taxon>
        <taxon>Pseudomonadati</taxon>
        <taxon>Pseudomonadota</taxon>
        <taxon>Gammaproteobacteria</taxon>
        <taxon>Pasteurellales</taxon>
        <taxon>Pasteurellaceae</taxon>
        <taxon>Haemophilus</taxon>
    </lineage>
</organism>
<dbReference type="EMBL" id="AAZF01000008">
    <property type="protein sequence ID" value="EDJ92417.1"/>
    <property type="molecule type" value="Genomic_DNA"/>
</dbReference>
<dbReference type="RefSeq" id="WP_005658162.1">
    <property type="nucleotide sequence ID" value="NZ_AAZF01000008.1"/>
</dbReference>
<dbReference type="PDB" id="3ZH5">
    <property type="method" value="X-ray"/>
    <property type="resolution" value="1.80 A"/>
    <property type="chains" value="A/B=26-157"/>
</dbReference>
<dbReference type="PDB" id="3ZH6">
    <property type="method" value="X-ray"/>
    <property type="resolution" value="2.29 A"/>
    <property type="chains" value="A/B=26-157"/>
</dbReference>
<dbReference type="PDB" id="3ZH7">
    <property type="method" value="X-ray"/>
    <property type="resolution" value="2.10 A"/>
    <property type="chains" value="A/B=29-153"/>
</dbReference>
<dbReference type="PDBsum" id="3ZH5"/>
<dbReference type="PDBsum" id="3ZH6"/>
<dbReference type="PDBsum" id="3ZH7"/>
<dbReference type="SMR" id="A4NBN9"/>
<dbReference type="IntAct" id="A4NBN9">
    <property type="interactions" value="1"/>
</dbReference>
<dbReference type="Proteomes" id="UP000003185">
    <property type="component" value="Unassembled WGS sequence"/>
</dbReference>
<dbReference type="GO" id="GO:0009279">
    <property type="term" value="C:cell outer membrane"/>
    <property type="evidence" value="ECO:0007669"/>
    <property type="project" value="UniProtKB-SubCell"/>
</dbReference>
<dbReference type="GO" id="GO:0009986">
    <property type="term" value="C:cell surface"/>
    <property type="evidence" value="ECO:0007669"/>
    <property type="project" value="UniProtKB-SubCell"/>
</dbReference>
<dbReference type="Gene3D" id="2.40.128.710">
    <property type="entry name" value="Surface-adhesin protein E"/>
    <property type="match status" value="1"/>
</dbReference>
<dbReference type="InterPro" id="IPR043088">
    <property type="entry name" value="Adhesin_E"/>
</dbReference>
<dbReference type="InterPro" id="IPR031939">
    <property type="entry name" value="Adhesin_E-like"/>
</dbReference>
<dbReference type="InterPro" id="IPR016595">
    <property type="entry name" value="Adhesin_E_Pasteurellaceae"/>
</dbReference>
<dbReference type="Pfam" id="PF16747">
    <property type="entry name" value="Adhesin_E"/>
    <property type="match status" value="1"/>
</dbReference>
<dbReference type="PIRSF" id="PIRSF012320">
    <property type="entry name" value="Prplsmic_HI0178_prd"/>
    <property type="match status" value="1"/>
</dbReference>
<dbReference type="PROSITE" id="PS51257">
    <property type="entry name" value="PROKAR_LIPOPROTEIN"/>
    <property type="match status" value="1"/>
</dbReference>
<reference key="1">
    <citation type="journal article" date="2007" name="Genome Biol.">
        <title>Characterization and modeling of the Haemophilus influenzae core and supragenomes based on the complete genomic sequences of Rd and 12 clinical nontypeable strains.</title>
        <authorList>
            <person name="Hogg J.S."/>
            <person name="Hu F.Z."/>
            <person name="Janto B."/>
            <person name="Boissy R."/>
            <person name="Hayes J."/>
            <person name="Keefe R."/>
            <person name="Post J.C."/>
            <person name="Ehrlich G.D."/>
        </authorList>
    </citation>
    <scope>NUCLEOTIDE SEQUENCE [LARGE SCALE GENOMIC DNA]</scope>
    <source>
        <strain>NTHi 3655</strain>
    </source>
</reference>
<reference key="2">
    <citation type="journal article" date="2008" name="Microbes Infect.">
        <title>Identification of a novel Haemophilus influenzae protein important for adhesion to epithelial cells.</title>
        <authorList>
            <person name="Ronander E."/>
            <person name="Brant M."/>
            <person name="Janson H."/>
            <person name="Sheldon J."/>
            <person name="Forsgren A."/>
            <person name="Riesbeck K."/>
        </authorList>
    </citation>
    <scope>FUNCTION</scope>
    <scope>SUBCELLULAR LOCATION</scope>
    <scope>DISRUPTION PHENOTYPE</scope>
    <source>
        <strain>NTHi 3655</strain>
        <strain>NTHi 772</strain>
    </source>
</reference>
<reference key="3">
    <citation type="journal article" date="2009" name="J. Immunol.">
        <title>Nontypeable Haemophilus influenzae protein E binds vitronectin and is important for serum resistance.</title>
        <authorList>
            <person name="Hallstrom T."/>
            <person name="Blom A.M."/>
            <person name="Zipfel P.F."/>
            <person name="Riesbeck K."/>
        </authorList>
    </citation>
    <scope>FUNCTION</scope>
    <scope>INTERACTION WITH VITRONECTIN</scope>
    <scope>DISRUPTION PHENOTYPE</scope>
    <source>
        <strain>NTHi 3655</strain>
    </source>
</reference>
<reference key="4">
    <citation type="journal article" date="2009" name="J. Infect. Dis.">
        <title>Nontypeable Haemophilus influenzae adhesin protein E: characterization and biological activity.</title>
        <authorList>
            <person name="Ronander E."/>
            <person name="Brant M."/>
            <person name="Eriksson E."/>
            <person name="Morgelin M."/>
            <person name="Hallgren O."/>
            <person name="Westergren-Thorsson G."/>
            <person name="Forsgren A."/>
            <person name="Riesbeck K."/>
        </authorList>
    </citation>
    <scope>FUNCTION</scope>
    <source>
        <strain>NTHi 3655</strain>
    </source>
</reference>
<reference key="5">
    <citation type="journal article" date="2011" name="J. Infect. Dis.">
        <title>Haemophilus influenzae protein E binds to the extracellular matrix by concurrently interacting with laminin and vitronectin.</title>
        <authorList>
            <person name="Hallstrom T."/>
            <person name="Singh B."/>
            <person name="Resman F."/>
            <person name="Blom A.M."/>
            <person name="Morgelin M."/>
            <person name="Riesbeck K."/>
        </authorList>
    </citation>
    <scope>FUNCTION</scope>
    <scope>INTERACTION WITH LAMININ AND VITRONECTIN</scope>
    <scope>DISRUPTION PHENOTYPE</scope>
    <source>
        <strain>NTHi 3655</strain>
    </source>
</reference>
<reference key="6">
    <citation type="journal article" date="2011" name="Mol. Microbiol.">
        <title>Haemophilus influenzae protein E recognizes the C-terminal domain of vitronectin and modulates the membrane attack complex.</title>
        <authorList>
            <person name="Singh B."/>
            <person name="Jalalvand F."/>
            <person name="Morgelin M."/>
            <person name="Zipfel P."/>
            <person name="Blom A.M."/>
            <person name="Riesbeck K."/>
        </authorList>
    </citation>
    <scope>FUNCTION</scope>
    <scope>INTERACTION WITH VITRONECTIN</scope>
    <scope>MUTAGENESIS OF LYS-85 AND ARG-86</scope>
    <source>
        <strain>NTHi 3655</strain>
    </source>
</reference>
<reference key="7">
    <citation type="journal article" date="2012" name="J. Immunol.">
        <title>Haemophilus influenzae uses the surface protein E to acquire human plasminogen and to evade innate immunity.</title>
        <authorList>
            <person name="Barthel D."/>
            <person name="Singh B."/>
            <person name="Riesbeck K."/>
            <person name="Zipfel P.F."/>
        </authorList>
    </citation>
    <scope>FUNCTION</scope>
    <scope>INTERACTION WITH PLASMINOGEN</scope>
    <scope>DISRUPTION PHENOTYPE</scope>
    <source>
        <strain>NTHi 3655</strain>
    </source>
</reference>
<reference key="8">
    <citation type="journal article" date="2012" name="Acta Crystallogr. F">
        <title>Crystallization and X-ray diffraction analysis of a novel surface-adhesin protein: protein E from Haemophilus influenzae.</title>
        <authorList>
            <person name="Singh B."/>
            <person name="Al Jubair T."/>
            <person name="Fornvik K."/>
            <person name="Thunnissen M.M."/>
            <person name="Riesbeck K."/>
        </authorList>
    </citation>
    <scope>CRYSTALLIZATION</scope>
    <scope>SUBUNIT</scope>
</reference>
<reference key="9">
    <citation type="journal article" date="2013" name="Infect. Immun.">
        <title>The unique structure of Haemophilus influenzae protein E reveals multiple binding sites for host factors.</title>
        <authorList>
            <person name="Singh B."/>
            <person name="Al-Jubair T."/>
            <person name="Morgelin M."/>
            <person name="Thunnissen M.M."/>
            <person name="Riesbeck K."/>
        </authorList>
    </citation>
    <scope>X-RAY CRYSTALLOGRAPHY (2.1 ANGSTROMS) OF 26-157</scope>
    <scope>SUBUNIT</scope>
</reference>